<organismHost>
    <name type="scientific">Cercopithecus hamlyni</name>
    <name type="common">Owl-faced monkey</name>
    <name type="synonym">Hamlyn's monkey</name>
    <dbReference type="NCBI Taxonomy" id="9536"/>
</organismHost>
<organismHost>
    <name type="scientific">Homo sapiens</name>
    <name type="common">Human</name>
    <dbReference type="NCBI Taxonomy" id="9606"/>
</organismHost>
<organismHost>
    <name type="scientific">Macaca</name>
    <name type="common">macaques</name>
    <dbReference type="NCBI Taxonomy" id="9539"/>
</organismHost>
<organismHost>
    <name type="scientific">Pan troglodytes</name>
    <name type="common">Chimpanzee</name>
    <dbReference type="NCBI Taxonomy" id="9598"/>
</organismHost>
<proteinExistence type="inferred from homology"/>
<sequence length="2227" mass="251900">MNMSKQGIFQTVGSGLDHILSLADIEEEQMIQSVDRTAVTGASYFTSVDQSSVHTAEVGSHQIEPLKTSVDKPGSKKTQGEKFFLIHSADWLTTHALFHEVAKLDVVKLLYNEQFAVQGLLRYHTYARFGIEIQVQINPTPFQQGGLICAMVPGDQSYGSIASLTVYPHGLLNCNINNVVRIKVPFIYTRGAYHFKDPQYPVWELTIRVWSELNIGTGTSAYTSLNVLARFTDLELHGLTPLSTQMMRNEFRVSTTENVVNLSNYEDARAKMSFALDQEDWKSDPSQGGGIKITHFTTWTSIPTLAAQFPFNASDSVGQQIKVIPVDPYFFQMTNTNPDQKCITALASICQMFCFWRGDLVFDFQVFPTKYHSGRLLFCFVPGNELIDVTGITLKQATTAPCAVMDITGVQSTLRFRVPWISDTPYRVNRYTKSAHQKGEYTAIGKLIVYCYNRLTSPSNVASHVRVNVYLSAINLECFAPLYHAMDVTTQVGDDSGGFSTTVSTEQNVPDPQVGITTMRDLKGKANRGKMDVSGVQAPRGSYQQQLNDPVLAKKVPETFPELKPGESRHTSDHMSIYKFMGRSHFLCTFTFNSNNKEYTFPITLSSTSNPPHGLPSTLRWFFNLFQLYRGPLDLTIIITGATDVDGMAWFTPVGLAVDPWVEKESALSIDYKTALGAVRFNTRRTGNIQIRLPWYSYLYAVSGALDGLGDKTDSTFGLFLFEIANYNHSDEYLSFSCYLSVTEQSEFYFPRAPLNSNAMLSTESMMSRIAAGDLESSVDDPRSEEDRRFESHIECRKPYKELRLEVGKQRLKYAQEELSNEVLPPPRKMKGLFSQAKISLFYTEEHEIMKFSWRGVTADTRALRRFGFSLAAGRSVWTLEMDAGVLTGRLIRLNDEKWTEMKDDKIVSLIEKFTSNKYWSKVNFPHGMLDLEEIAANSKDFPNMSETDLCFLLHWLNPKKINLADRMLGLSGVQEIKEQGVGLIAECRTFLDSIAGTLKSMMFGFHHSVTVEIINTVLCFVKSGILLYVIQQLNQDEHSHIIGLLRVMNYADIGCSVISCGKVFSKMLETVFNWQMDSRMMELRTQSFSNWLRDICSGITIFKSFKDAIYWLYTKLKDFYEVNYGKKKDILNILKDNQQKIEKAIEEADNFCILQIQDVEKFDQYQKGVDLIQKLRTVHSMAQVDPNLGVHLSPLRDCIARVHQKLKNLGSINQAMVTRCEPVVCYLYGKRGGGKSLTSIALATKICKHYGVEPEKNIYTKPVASDYWDGYSGQLVCIIDDIGQNTTDEDWSDFCQLVSGCPMRLNMASLEEKGRHFSSPFIIATSNWSNPSPKTVYVKEAIDRRLHFKVEVKPASFFKNPHNDMLNVNLAKTNDAIKDMSCVDLIMDGHNISLMDLLSSLVMTVEIRKQNMSEFMELWSQGISDDDNDSAVAEFFQSFPSGEPSNWKLSSFFQSVTNHKWVAVGAAVGILGVLVGGWFVYKHFSRKEEEPIPAEGVYHGVTKPKQVIKLDADPVESQSTLEIAGLVRKNLVQFGVGEKNGCVRWVMNALGVKDDWLLVPSHAYKFEKDYEMMEFYFNRGGTYYSISAGNVVIQSLDVGFQDVVLMKVPTIPKFRDITQHFIKKGDVPRALNRLATLVTTVNGTPMLISEGPLKMEEKATYVHKKNDGTTVDLTVDQAWRGKGEGLPGMCGGALVSSNQSIQNAILGIHVAGGNSILVAKLVTQEMFQNIDKKIESQRIMKVEFTQCSMNVVSKTLFRKSPIHHHIDKTMINFPAAMPFSKAEIDPMAMMLSKYSLPIVEEPEDYKEASVFYQNKIVGKTQLVDDFLDLDMAITGAPGIDAINMDSSPGFPYVQEKLTKRDLIWLDENGLLLGVHPRLAQRILFNTVMMENCSDLDVVFTTCPKDELRPLEKVLESKTRAIDACPLDYTILCRMYWGPAISYFHLNPGFHTGVAIGIDPDRQWDELFKTMIRFGDVGLDLDFSAFDASLSPFMIREAGRIMSELSGTPSHFGTALINTIIYSKHLLYNCCYHVCGSMPSGSPCTALLNSIINNINLYYVFSKIFGKSPVFFCQALRILCYGDDVLIVFSRDVQIDNLDLIGQKIVDEFKKLGMTATSADKNVPQLKPVSELTFLKRSFNLVEDRIRPAISEKTIWSLMAWQRSNAEFEQNLENAQWFAFMHGYEFYQKFYYFVQSCLEKEMIEYRLKSYDWWRMRFYDQCFICDLS</sequence>
<dbReference type="EC" id="3.6.1.15"/>
<dbReference type="EC" id="3.4.22.28" evidence="4"/>
<dbReference type="EC" id="2.7.7.48" evidence="4"/>
<dbReference type="EMBL" id="K02990">
    <property type="protein sequence ID" value="AAA45472.1"/>
    <property type="molecule type" value="Genomic_RNA"/>
</dbReference>
<dbReference type="PIR" id="A03903">
    <property type="entry name" value="GNNYHR"/>
</dbReference>
<dbReference type="BMRB" id="P06441"/>
<dbReference type="SMR" id="P06441"/>
<dbReference type="DrugBank" id="DB04634">
    <property type="generic name" value="N-BENZYLOXYCARBONYL-L-SERINE-BETALACTONE"/>
</dbReference>
<dbReference type="MEROPS" id="C03.005"/>
<dbReference type="Proteomes" id="UP000007903">
    <property type="component" value="Genome"/>
</dbReference>
<dbReference type="GO" id="GO:0044162">
    <property type="term" value="C:host cell cytoplasmic vesicle membrane"/>
    <property type="evidence" value="ECO:0007669"/>
    <property type="project" value="UniProtKB-SubCell"/>
</dbReference>
<dbReference type="GO" id="GO:0044193">
    <property type="term" value="C:host cell mitochondrial outer membrane"/>
    <property type="evidence" value="ECO:0007669"/>
    <property type="project" value="UniProtKB-SubCell"/>
</dbReference>
<dbReference type="GO" id="GO:0072494">
    <property type="term" value="C:host multivesicular body"/>
    <property type="evidence" value="ECO:0007669"/>
    <property type="project" value="UniProtKB-SubCell"/>
</dbReference>
<dbReference type="GO" id="GO:0016020">
    <property type="term" value="C:membrane"/>
    <property type="evidence" value="ECO:0007669"/>
    <property type="project" value="UniProtKB-KW"/>
</dbReference>
<dbReference type="GO" id="GO:0039618">
    <property type="term" value="C:T=pseudo3 icosahedral viral capsid"/>
    <property type="evidence" value="ECO:0007669"/>
    <property type="project" value="UniProtKB-KW"/>
</dbReference>
<dbReference type="GO" id="GO:0005524">
    <property type="term" value="F:ATP binding"/>
    <property type="evidence" value="ECO:0007669"/>
    <property type="project" value="UniProtKB-KW"/>
</dbReference>
<dbReference type="GO" id="GO:0015267">
    <property type="term" value="F:channel activity"/>
    <property type="evidence" value="ECO:0007669"/>
    <property type="project" value="UniProtKB-KW"/>
</dbReference>
<dbReference type="GO" id="GO:0004197">
    <property type="term" value="F:cysteine-type endopeptidase activity"/>
    <property type="evidence" value="ECO:0007669"/>
    <property type="project" value="UniProtKB-EC"/>
</dbReference>
<dbReference type="GO" id="GO:0017111">
    <property type="term" value="F:ribonucleoside triphosphate phosphatase activity"/>
    <property type="evidence" value="ECO:0007669"/>
    <property type="project" value="UniProtKB-EC"/>
</dbReference>
<dbReference type="GO" id="GO:0003723">
    <property type="term" value="F:RNA binding"/>
    <property type="evidence" value="ECO:0007669"/>
    <property type="project" value="UniProtKB-KW"/>
</dbReference>
<dbReference type="GO" id="GO:0003724">
    <property type="term" value="F:RNA helicase activity"/>
    <property type="evidence" value="ECO:0007669"/>
    <property type="project" value="InterPro"/>
</dbReference>
<dbReference type="GO" id="GO:0003968">
    <property type="term" value="F:RNA-directed RNA polymerase activity"/>
    <property type="evidence" value="ECO:0007669"/>
    <property type="project" value="UniProtKB-KW"/>
</dbReference>
<dbReference type="GO" id="GO:0005198">
    <property type="term" value="F:structural molecule activity"/>
    <property type="evidence" value="ECO:0007669"/>
    <property type="project" value="InterPro"/>
</dbReference>
<dbReference type="GO" id="GO:0006351">
    <property type="term" value="P:DNA-templated transcription"/>
    <property type="evidence" value="ECO:0007669"/>
    <property type="project" value="InterPro"/>
</dbReference>
<dbReference type="GO" id="GO:0034220">
    <property type="term" value="P:monoatomic ion transmembrane transport"/>
    <property type="evidence" value="ECO:0007669"/>
    <property type="project" value="UniProtKB-KW"/>
</dbReference>
<dbReference type="GO" id="GO:0006508">
    <property type="term" value="P:proteolysis"/>
    <property type="evidence" value="ECO:0007669"/>
    <property type="project" value="UniProtKB-KW"/>
</dbReference>
<dbReference type="GO" id="GO:0046718">
    <property type="term" value="P:symbiont entry into host cell"/>
    <property type="evidence" value="ECO:0007669"/>
    <property type="project" value="UniProtKB-KW"/>
</dbReference>
<dbReference type="GO" id="GO:0039545">
    <property type="term" value="P:symbiont-mediated suppression of host cytoplasmic pattern recognition receptor signaling pathway via inhibition of MAVS activity"/>
    <property type="evidence" value="ECO:0007669"/>
    <property type="project" value="UniProtKB-KW"/>
</dbReference>
<dbReference type="GO" id="GO:0039694">
    <property type="term" value="P:viral RNA genome replication"/>
    <property type="evidence" value="ECO:0007669"/>
    <property type="project" value="InterPro"/>
</dbReference>
<dbReference type="GO" id="GO:0019062">
    <property type="term" value="P:virion attachment to host cell"/>
    <property type="evidence" value="ECO:0007669"/>
    <property type="project" value="UniProtKB-KW"/>
</dbReference>
<dbReference type="CDD" id="cd23215">
    <property type="entry name" value="Hepatovirus_RdRp"/>
    <property type="match status" value="1"/>
</dbReference>
<dbReference type="CDD" id="cd00205">
    <property type="entry name" value="rhv_like"/>
    <property type="match status" value="2"/>
</dbReference>
<dbReference type="FunFam" id="2.60.120.20:FF:000017">
    <property type="entry name" value="Genome polyprotein"/>
    <property type="match status" value="1"/>
</dbReference>
<dbReference type="FunFam" id="3.30.70.270:FF:000111">
    <property type="entry name" value="Genome polyprotein"/>
    <property type="match status" value="1"/>
</dbReference>
<dbReference type="Gene3D" id="1.20.960.20">
    <property type="match status" value="1"/>
</dbReference>
<dbReference type="Gene3D" id="2.60.120.20">
    <property type="match status" value="3"/>
</dbReference>
<dbReference type="Gene3D" id="3.30.70.270">
    <property type="match status" value="1"/>
</dbReference>
<dbReference type="Gene3D" id="2.40.10.10">
    <property type="entry name" value="Trypsin-like serine proteases"/>
    <property type="match status" value="2"/>
</dbReference>
<dbReference type="InterPro" id="IPR049133">
    <property type="entry name" value="2B_soluble"/>
</dbReference>
<dbReference type="InterPro" id="IPR043502">
    <property type="entry name" value="DNA/RNA_pol_sf"/>
</dbReference>
<dbReference type="InterPro" id="IPR004004">
    <property type="entry name" value="Helic/Pol/Pept_Calicivir-typ"/>
</dbReference>
<dbReference type="InterPro" id="IPR000605">
    <property type="entry name" value="Helicase_SF3_ssDNA/RNA_vir"/>
</dbReference>
<dbReference type="InterPro" id="IPR014759">
    <property type="entry name" value="Helicase_SF3_ssRNA_vir"/>
</dbReference>
<dbReference type="InterPro" id="IPR024354">
    <property type="entry name" value="Hepatitis_A_VP1-2A"/>
</dbReference>
<dbReference type="InterPro" id="IPR044067">
    <property type="entry name" value="PCV_3C_PRO"/>
</dbReference>
<dbReference type="InterPro" id="IPR000199">
    <property type="entry name" value="Peptidase_C3A/C3B_picornavir"/>
</dbReference>
<dbReference type="InterPro" id="IPR009003">
    <property type="entry name" value="Peptidase_S1_PA"/>
</dbReference>
<dbReference type="InterPro" id="IPR043504">
    <property type="entry name" value="Peptidase_S1_PA_chymotrypsin"/>
</dbReference>
<dbReference type="InterPro" id="IPR001676">
    <property type="entry name" value="Picornavirus_capsid"/>
</dbReference>
<dbReference type="InterPro" id="IPR043128">
    <property type="entry name" value="Rev_trsase/Diguanyl_cyclase"/>
</dbReference>
<dbReference type="InterPro" id="IPR033703">
    <property type="entry name" value="Rhv-like"/>
</dbReference>
<dbReference type="InterPro" id="IPR001205">
    <property type="entry name" value="RNA-dir_pol_C"/>
</dbReference>
<dbReference type="InterPro" id="IPR007094">
    <property type="entry name" value="RNA-dir_pol_PSvirus"/>
</dbReference>
<dbReference type="InterPro" id="IPR029053">
    <property type="entry name" value="Viral_coat"/>
</dbReference>
<dbReference type="Pfam" id="PF20758">
    <property type="entry name" value="2B_soluble"/>
    <property type="match status" value="1"/>
</dbReference>
<dbReference type="Pfam" id="PF12944">
    <property type="entry name" value="HAV_VP"/>
    <property type="match status" value="1"/>
</dbReference>
<dbReference type="Pfam" id="PF00548">
    <property type="entry name" value="Peptidase_C3"/>
    <property type="match status" value="1"/>
</dbReference>
<dbReference type="Pfam" id="PF00680">
    <property type="entry name" value="RdRP_1"/>
    <property type="match status" value="1"/>
</dbReference>
<dbReference type="Pfam" id="PF00073">
    <property type="entry name" value="Rhv"/>
    <property type="match status" value="2"/>
</dbReference>
<dbReference type="Pfam" id="PF00910">
    <property type="entry name" value="RNA_helicase"/>
    <property type="match status" value="1"/>
</dbReference>
<dbReference type="PRINTS" id="PR00918">
    <property type="entry name" value="CALICVIRUSNS"/>
</dbReference>
<dbReference type="SUPFAM" id="SSF56672">
    <property type="entry name" value="DNA/RNA polymerases"/>
    <property type="match status" value="1"/>
</dbReference>
<dbReference type="SUPFAM" id="SSF88633">
    <property type="entry name" value="Positive stranded ssRNA viruses"/>
    <property type="match status" value="3"/>
</dbReference>
<dbReference type="SUPFAM" id="SSF50494">
    <property type="entry name" value="Trypsin-like serine proteases"/>
    <property type="match status" value="1"/>
</dbReference>
<dbReference type="PROSITE" id="PS51874">
    <property type="entry name" value="PCV_3C_PRO"/>
    <property type="match status" value="1"/>
</dbReference>
<dbReference type="PROSITE" id="PS50507">
    <property type="entry name" value="RDRP_SSRNA_POS"/>
    <property type="match status" value="1"/>
</dbReference>
<dbReference type="PROSITE" id="PS51218">
    <property type="entry name" value="SF3_HELICASE_2"/>
    <property type="match status" value="1"/>
</dbReference>
<organism>
    <name type="scientific">Human hepatitis A virus genotype IA (isolate LA)</name>
    <name type="common">HHAV</name>
    <name type="synonym">Human hepatitis A virus (isolate Human/Northern California/LA/1974)</name>
    <dbReference type="NCBI Taxonomy" id="12099"/>
    <lineage>
        <taxon>Viruses</taxon>
        <taxon>Riboviria</taxon>
        <taxon>Orthornavirae</taxon>
        <taxon>Pisuviricota</taxon>
        <taxon>Pisoniviricetes</taxon>
        <taxon>Picornavirales</taxon>
        <taxon>Picornaviridae</taxon>
        <taxon>Heptrevirinae</taxon>
        <taxon>Hepatovirus</taxon>
        <taxon>Hepatovirus ahepa</taxon>
        <taxon>Hepatovirus A</taxon>
    </lineage>
</organism>
<comment type="function">
    <molecule>Capsid protein VP1</molecule>
    <text evidence="4">Capsid proteins VP1, VP2, and VP3 form a closed capsid enclosing the viral positive strand RNA genome. All these proteins contain a beta-sheet structure called beta-barrel jelly roll. Together they form an icosahedral capsid (T=3) composed of 60 copies of each VP1, VP2, and VP3, with a diameter of approximately 300 Angstroms. VP1 is situated at the 12 fivefold axes, whereas VP2 and VP3 are located at the quasi-sixfold axes. The naked capsid interacts with the host receptor HAVCR1 to provide virion attachment to and probably entry into the target cell.</text>
</comment>
<comment type="function">
    <molecule>Capsid protein VP2</molecule>
    <text evidence="4">Capsid proteins VP1, VP2, and VP3 form a closed capsid enclosing the viral positive strand RNA genome. All these proteins contain a beta-sheet structure called beta-barrel jelly roll. Together they form an icosahedral capsid (T=3) composed of 60 copies of each VP1, VP2, and VP3, with a diameter of approximately 300 Angstroms. VP1 is situated at the 12 fivefold axes, whereas VP2 and VP3 are located at the quasi-sixfold axes. The naked capsid interacts with the host receptor HAVCR1 to provide virion attachment to and probably entry into the target cell.</text>
</comment>
<comment type="function">
    <molecule>Capsid protein VP3</molecule>
    <text evidence="4">Capsid proteins VP1, VP2, and VP3 form a closed capsid enclosing the viral positive strand RNA genome. All these proteins contain a beta-sheet structure called beta-barrel jelly roll. Together they form an icosahedral capsid (T=3) composed of 60 copies of each VP1, VP2, and VP3, with a diameter of approximately 300 Angstroms. VP1 is situated at the 12 fivefold axes, whereas VP2 and VP3 are located at the quasi-sixfold axes. The naked capsid interacts with the host receptor HAVCR1 to provide virion attachment to and probably entry into the target cell.</text>
</comment>
<comment type="function">
    <molecule>Capsid protein VP0</molecule>
    <text evidence="4">VP0 precursor is a component of the immature procapsids.</text>
</comment>
<comment type="function">
    <molecule>Capsid protein VP4</molecule>
    <text evidence="4">Plays a role in the assembly of the 12 pentamers into an icosahedral structure. Has not been detected in mature virions, supposedly owing to its small size.</text>
</comment>
<comment type="function">
    <molecule>Protein VP1-2A</molecule>
    <text evidence="4">Precursor component of immature procapsids that corresponds to an extended form of the structural protein VP1. After maturation, possibly by the host Cathepsin L, the assembly signal 2A is cleaved to give rise to the mature VP1 protein.</text>
</comment>
<comment type="function">
    <molecule>Protein 2B</molecule>
    <text evidence="4">Functions as a viroporin. Affects membrane integrity and causes an increase in membrane permeability. Involved in host intracellular membrane rearrangements probably to give rise to the viral factories. Does not disrupt calcium homeostasis or glycoprotein trafficking. Antagonizes the innate immune response of the host by suppressing IFN-beta synthesis, which it achieves by interfering with the RIG-I/IFIH1 pathway.</text>
</comment>
<comment type="function">
    <molecule>Protein 2BC</molecule>
    <text evidence="4">Affects membrane integrity and causes an increase in membrane permeability.</text>
</comment>
<comment type="function">
    <molecule>Protein 2C</molecule>
    <text evidence="4">Associates with and induces structural rearrangements of intracellular membranes. Displays RNA-binding activity.</text>
</comment>
<comment type="function">
    <molecule>Protein 3ABC</molecule>
    <text evidence="4">The precursor 3ABC is targeted to the mitochondrial membrane where protease 3C activity cleaves and inhibits the host antiviral protein MAVS, thereby disrupting activation of IRF3 through the IFIH1/MDA5 pathway. In vivo, the protease activity of 3ABC precursor is more efficient in cleaving the 2BC precursor than that of protein 3C. The 3ABC precursor may therefore play a role in the proteolytic processing of the polyprotein. Possible viroporin.</text>
</comment>
<comment type="function">
    <molecule>Protein 3AB</molecule>
    <text evidence="4">Interacts with the 3CD precursor and with RNA structures found at both the 5'- and 3'-termini of the viral genome. Since the 3AB precursor contains the hydrophobic domain 3A, it probably anchors the whole viral replicase complex to intracellular membranes on which viral RNA synthesis occurs.</text>
</comment>
<comment type="function">
    <molecule>Protein 3A</molecule>
    <text evidence="4">May serve as membrane anchor to the 3AB and 3ABC precursors via its hydrophobic domain. May interact with RNA.</text>
</comment>
<comment type="function">
    <molecule>Viral protein genome-linked</molecule>
    <text evidence="2 4">Acts as a primer for viral RNA replication and remains covalently bound to viral genomic RNA. VPg is uridylylated prior to priming replication into VPg-pUpU. The VPg-pUpU is then used as primer on the genomic RNA poly(A) by the RNA-dependent RNA polymerase to replicate the viral genome.</text>
</comment>
<comment type="function">
    <molecule>Protease 3C</molecule>
    <text evidence="4">Cysteine protease that generates mature viral proteins from the precursor polyprotein. In addition to its proteolytic activity, it binds to viral RNA, and thus influences viral genome replication. RNA and substrate bind cooperatively to the protease. Cleaves IKBKG/NEMO to impair innate immune signaling. Cleaves host PABPC1 which may participate in the switch of viral translation to RNA synthesis.</text>
</comment>
<comment type="function">
    <molecule>Protein 3CD</molecule>
    <text evidence="4">Interacts with the 3AB precursor and with RNA structures found at both the 5'- and 3'-termini of the viral genome. Disrupts TLR3 signaling by degrading the host adapter protein TICAM1/TRIF.</text>
</comment>
<comment type="function">
    <text evidence="4">RNA-directed RNA polymerase 3D-POL replicates genomic and antigenomic RNA by recognizing replications specific signals.</text>
</comment>
<comment type="catalytic activity">
    <reaction evidence="4 6">
        <text>RNA(n) + a ribonucleoside 5'-triphosphate = RNA(n+1) + diphosphate</text>
        <dbReference type="Rhea" id="RHEA:21248"/>
        <dbReference type="Rhea" id="RHEA-COMP:14527"/>
        <dbReference type="Rhea" id="RHEA-COMP:17342"/>
        <dbReference type="ChEBI" id="CHEBI:33019"/>
        <dbReference type="ChEBI" id="CHEBI:61557"/>
        <dbReference type="ChEBI" id="CHEBI:140395"/>
        <dbReference type="EC" id="2.7.7.48"/>
    </reaction>
</comment>
<comment type="catalytic activity">
    <reaction evidence="4">
        <text>a ribonucleoside 5'-triphosphate + H2O = a ribonucleoside 5'-diphosphate + phosphate + H(+)</text>
        <dbReference type="Rhea" id="RHEA:23680"/>
        <dbReference type="ChEBI" id="CHEBI:15377"/>
        <dbReference type="ChEBI" id="CHEBI:15378"/>
        <dbReference type="ChEBI" id="CHEBI:43474"/>
        <dbReference type="ChEBI" id="CHEBI:57930"/>
        <dbReference type="ChEBI" id="CHEBI:61557"/>
        <dbReference type="EC" id="3.6.1.15"/>
    </reaction>
</comment>
<comment type="catalytic activity">
    <reaction evidence="8">
        <text>Selective cleavage of Gln-|-Gly bond in the poliovirus polyprotein. In other picornavirus reactions Glu may be substituted for Gln, and Ser or Thr for Gly.</text>
        <dbReference type="EC" id="3.4.22.28"/>
    </reaction>
</comment>
<comment type="subunit">
    <molecule>Protein 2B</molecule>
    <text evidence="4">Homodimer. Homomultimer; probably interacts with membranes in a multimeric form. Seems to assemble into amyloid-like fibers.</text>
</comment>
<comment type="subunit">
    <molecule>Protein 3AB</molecule>
    <text evidence="4">Homodimer. Monomer. Interacts with protein 3CD.</text>
</comment>
<comment type="subunit">
    <molecule>Protein 3A</molecule>
    <text evidence="4">Interacts with host ACBD3 (By similarity).</text>
</comment>
<comment type="subunit">
    <molecule>Protein 3CD</molecule>
    <text evidence="4">Interacts with protein 3AB.</text>
</comment>
<comment type="subunit">
    <molecule>Protein 3ABC</molecule>
    <text evidence="4">Interacts with human MAVS.</text>
</comment>
<comment type="subunit">
    <molecule>Protease 3C</molecule>
    <text evidence="4">Homodimer; disulfide-linked.</text>
</comment>
<comment type="subunit">
    <molecule>Protein VP1-2A</molecule>
    <text evidence="4">Homopentamer. Homooligomer.</text>
</comment>
<comment type="subunit">
    <molecule>Capsid protein VP1</molecule>
    <text evidence="4">Interacts with capsid protein VP2. Interacts with capsid protein VP3.</text>
</comment>
<comment type="subunit">
    <molecule>Capsid protein VP2</molecule>
    <text evidence="4">Interacts with capsid protein VP1. Interacts with capsid protein VP3.</text>
</comment>
<comment type="subunit">
    <molecule>Capsid protein VP3</molecule>
    <text evidence="4">Interacts with capsid protein VP1. Interacts with capsid protein VP2.</text>
</comment>
<comment type="subcellular location">
    <molecule>Capsid protein VP2</molecule>
    <subcellularLocation>
        <location evidence="4">Virion</location>
    </subcellularLocation>
    <subcellularLocation>
        <location evidence="4">Host endosome</location>
        <location evidence="4">Host multivesicular body</location>
    </subcellularLocation>
    <text evidence="4">The egress of newly formed virions occurs through an exosome-like mechanism involving endosomal budding of viral capsids into multivesicular bodies.</text>
</comment>
<comment type="subcellular location">
    <molecule>Capsid protein VP3</molecule>
    <subcellularLocation>
        <location evidence="4">Virion</location>
    </subcellularLocation>
    <subcellularLocation>
        <location evidence="4">Host endosome</location>
        <location evidence="4">Host multivesicular body</location>
    </subcellularLocation>
    <text evidence="4">The egress of newly formed virions occurs through an exosome-like mechanism involving endosomal budding of viral capsids into multivesicular bodies.</text>
</comment>
<comment type="subcellular location">
    <molecule>Capsid protein VP1</molecule>
    <subcellularLocation>
        <location evidence="4">Virion</location>
    </subcellularLocation>
    <subcellularLocation>
        <location evidence="4">Host endosome</location>
        <location evidence="4">Host multivesicular body</location>
    </subcellularLocation>
    <text evidence="4">The egress of newly formed virions occurs through an exosome-like mechanism involving endosomal budding of viral capsids into multivesicular bodies.</text>
</comment>
<comment type="subcellular location">
    <molecule>Capsid protein VP4</molecule>
    <subcellularLocation>
        <location evidence="4">Virion</location>
    </subcellularLocation>
    <text evidence="4">Present in the full mature virion. The egress of newly formed virions occurs through an exosome-like mechanism involving endosomal budding of viral capsids into multivesicular bodies.</text>
</comment>
<comment type="subcellular location">
    <molecule>Protein 2B</molecule>
    <subcellularLocation>
        <location evidence="4">Host membrane</location>
        <topology evidence="4">Peripheral membrane protein</topology>
    </subcellularLocation>
    <text evidence="4">Probably localizes to intracellular membrane vesicles that are induced after virus infection as the site for viral RNA replication.</text>
</comment>
<comment type="subcellular location">
    <molecule>Protein 2C</molecule>
    <subcellularLocation>
        <location evidence="4">Host membrane</location>
        <topology evidence="4">Single-pass membrane protein</topology>
    </subcellularLocation>
    <text evidence="4">Probably localizes to intracellular membrane vesicles that are induced after virus infection as the site for viral RNA replication. May associate with membranes through a N-terminal amphipathic helix.</text>
</comment>
<comment type="subcellular location">
    <molecule>Protein 3ABC</molecule>
    <subcellularLocation>
        <location evidence="4">Host membrane</location>
        <topology evidence="5">Single-pass membrane protein</topology>
    </subcellularLocation>
    <subcellularLocation>
        <location evidence="4">Host mitochondrion outer membrane</location>
        <topology evidence="4">Single-pass membrane protein</topology>
    </subcellularLocation>
    <text evidence="4">Probably localizes to intracellular membrane vesicles that are induced after virus infection as the site for viral RNA replication.</text>
</comment>
<comment type="subcellular location">
    <molecule>Protein 3AB</molecule>
    <subcellularLocation>
        <location evidence="4">Host membrane</location>
        <topology evidence="5">Single-pass membrane protein</topology>
    </subcellularLocation>
    <text evidence="4">Probably localizes to intracellular membrane vesicles that are induced after virus infection as the site for viral RNA replication.</text>
</comment>
<comment type="subcellular location">
    <molecule>Protein 3A</molecule>
    <subcellularLocation>
        <location evidence="4">Host membrane</location>
        <topology evidence="5">Single-pass membrane protein</topology>
    </subcellularLocation>
    <text evidence="4">Probably localizes to intracellular membrane vesicles that are induced after virus infection as the site for viral RNA replication.</text>
</comment>
<comment type="subcellular location">
    <molecule>Viral protein genome-linked</molecule>
    <subcellularLocation>
        <location evidence="4">Virion</location>
    </subcellularLocation>
</comment>
<comment type="subcellular location">
    <molecule>Protease 3C</molecule>
    <subcellularLocation>
        <location evidence="4">Host cytoplasm</location>
    </subcellularLocation>
</comment>
<comment type="subcellular location">
    <molecule>RNA-directed RNA polymerase 3D-POL</molecule>
    <subcellularLocation>
        <location evidence="4">Host cytoplasmic vesicle membrane</location>
        <topology evidence="4">Peripheral membrane protein</topology>
        <orientation evidence="4">Cytoplasmic side</orientation>
    </subcellularLocation>
    <text evidence="4">Interacts with membranes in a complex with viral protein 3AB. Probably localizes to the surface of intracellular membrane vesicles that are induced after virus infection as the site for viral RNA replication. These vesicles are derived from the endoplasmic reticulum.</text>
</comment>
<comment type="domain">
    <molecule>Protein VP1-2A</molecule>
    <text evidence="4">The assembly signal 2A region mediates pentamerization of P1-2A.</text>
</comment>
<comment type="domain">
    <molecule>Genome polyprotein</molecule>
    <text evidence="4">Late-budding domains (L domains) are short sequence motifs essential for viral particle budding. They recruit proteins of the host ESCRT machinery (Endosomal Sorting Complex Required for Transport) or ESCRT-associated proteins. The genome polyprotein contains two L domains: a tandem of (L)YPX(n)L domain which is known to bind the PDCD6IP/ALIX adaptater protein.</text>
</comment>
<comment type="domain">
    <molecule>Capsid protein VP2</molecule>
    <text evidence="4">Late-budding domains (L domains) are short sequence motifs essential for viral particle budding. They recruit proteins of the host ESCRT machinery (Endosomal Sorting Complex Required for Transport) or ESCRT-associated proteins. Capsid protein VP2 contains two L domains: a tandem of (L)YPX(n)L domain which is known to bind the Alix adaptater protein.</text>
</comment>
<comment type="domain">
    <molecule>Protein 2B</molecule>
    <text evidence="4">The C-terminus displays a membrane-penetrating ability.</text>
</comment>
<comment type="PTM">
    <molecule>Genome polyprotein</molecule>
    <text evidence="4">Specific enzymatic cleavages by viral protease in vivo yield a variety of precursors and mature proteins. Polyprotein processing intermediates are produced, such as P1-2A which is a functional precursor of the structural proteins, VP0 which is a VP4-VP2 precursor, VP1-2A precursor, 3ABC precursor which is a stable and catalytically active precursor of 3A, 3B and 3C proteins, 3AB and 3CD precursors. The assembly signal 2A is removed from VP1-2A by a host protease, possibly host Cathepsin L. This cleavage occurs over a region of 3 amino-acids probably generating VP1 proteins with heterogeneous C-termini.</text>
</comment>
<comment type="PTM">
    <molecule>Capsid protein VP0</molecule>
    <text evidence="3">During virion maturation, immature virions are rendered infectious following cleavage of VP0 into VP4 and VP2. This maturation seems to be an autocatalytic event triggered by the presence of RNA in the capsid and is followed by a conformational change of the particle.</text>
</comment>
<comment type="PTM">
    <molecule>Protein VP1-2A</molecule>
    <text evidence="4">The assembly signal 2A is removed from VP1-2A by a host protease, possibly host Cathepsin L in naked virions. This cleavage does not occur in enveloped virions. This cleavage occurs over a region of 3 amino-acids probably generating VP1 proteins with heterogeneous C-termini.</text>
</comment>
<comment type="PTM">
    <molecule>Viral protein genome-linked</molecule>
    <text evidence="2">VPg is uridylylated prior to priming replication into VPg-pUpU.</text>
</comment>
<comment type="PTM">
    <molecule>Capsid protein VP4</molecule>
    <text evidence="4">Unlike other picornaviruses, does not seem to be myristoylated.</text>
</comment>
<comment type="miscellaneous">
    <molecule>Genome polyprotein</molecule>
    <text evidence="4">The need for an intact eIF4G factor for the initiation of translation of HAV results in an inability to shut off host protein synthesis by a mechanism similar to that of other picornaviruses.</text>
</comment>
<comment type="miscellaneous">
    <molecule>Genome polyprotein</molecule>
    <text evidence="4">During infection, enveloped virions (eHAV) are released from cells. These eHAV are cloaked in host-derived membranes and resemble exosomes. The membrane of eHAV is devoid of viral proteins and thus prevents their neutralization by antibodies. eHAV budding is dependent on ESCRT-associated proteins VPS4B and PDCD6IP/ALIX. eHAV are produced and released in the serum and plasma, but not in bile and feces which only contain the naked, nonenveloped virions. It is likely that eHAV also use HAVCR1 as a functional receptor to infect cells, an evolutionary trait that may enhance HAV infectivity.</text>
</comment>
<comment type="similarity">
    <text evidence="9">Belongs to the picornaviridae polyprotein family.</text>
</comment>
<comment type="caution">
    <text evidence="4">It is uncertain whether Met-1 or Met-3 is the initiator.</text>
</comment>
<protein>
    <recommendedName>
        <fullName>Genome polyprotein</fullName>
    </recommendedName>
    <component>
        <recommendedName>
            <fullName>Capsid protein VP0</fullName>
        </recommendedName>
        <alternativeName>
            <fullName>VP4-VP2</fullName>
        </alternativeName>
    </component>
    <component>
        <recommendedName>
            <fullName>Capsid protein VP4</fullName>
        </recommendedName>
        <alternativeName>
            <fullName>P1A</fullName>
        </alternativeName>
        <alternativeName>
            <fullName>Virion protein 4</fullName>
        </alternativeName>
    </component>
    <component>
        <recommendedName>
            <fullName>Capsid protein VP2</fullName>
        </recommendedName>
        <alternativeName>
            <fullName>P1B</fullName>
        </alternativeName>
        <alternativeName>
            <fullName>Virion protein 2</fullName>
        </alternativeName>
    </component>
    <component>
        <recommendedName>
            <fullName>Capsid protein VP3</fullName>
        </recommendedName>
        <alternativeName>
            <fullName>P1C</fullName>
        </alternativeName>
        <alternativeName>
            <fullName>Virion protein 3</fullName>
        </alternativeName>
    </component>
    <component>
        <recommendedName>
            <fullName>Protein VP1-2A</fullName>
        </recommendedName>
        <alternativeName>
            <fullName>VPX</fullName>
        </alternativeName>
    </component>
    <component>
        <recommendedName>
            <fullName>Capsid protein VP1</fullName>
        </recommendedName>
        <alternativeName>
            <fullName>P1D</fullName>
        </alternativeName>
        <alternativeName>
            <fullName>Virion protein 1</fullName>
        </alternativeName>
    </component>
    <component>
        <recommendedName>
            <fullName>Assembly signal 2A</fullName>
        </recommendedName>
        <alternativeName>
            <fullName evidence="4">pX</fullName>
        </alternativeName>
    </component>
    <component>
        <recommendedName>
            <fullName>Protein 2BC</fullName>
        </recommendedName>
    </component>
    <component>
        <recommendedName>
            <fullName>Protein 2B</fullName>
            <shortName>P2B</shortName>
        </recommendedName>
    </component>
    <component>
        <recommendedName>
            <fullName>Protein 2C</fullName>
            <shortName>P2C</shortName>
            <ecNumber>3.6.1.15</ecNumber>
        </recommendedName>
    </component>
    <component>
        <recommendedName>
            <fullName>Protein 3ABCD</fullName>
            <shortName>P3</shortName>
        </recommendedName>
    </component>
    <component>
        <recommendedName>
            <fullName>Protein 3ABC</fullName>
        </recommendedName>
    </component>
    <component>
        <recommendedName>
            <fullName>Protein 3AB</fullName>
        </recommendedName>
    </component>
    <component>
        <recommendedName>
            <fullName>Protein 3A</fullName>
            <shortName>P3A</shortName>
        </recommendedName>
    </component>
    <component>
        <recommendedName>
            <fullName>Viral protein genome-linked</fullName>
            <shortName>VPg</shortName>
        </recommendedName>
        <alternativeName>
            <fullName>Protein 3B</fullName>
            <shortName>P3B</shortName>
        </alternativeName>
    </component>
    <component>
        <recommendedName>
            <fullName>Protein 3CD</fullName>
        </recommendedName>
    </component>
    <component>
        <recommendedName>
            <fullName>Protease 3C</fullName>
            <shortName>P3C</shortName>
            <ecNumber evidence="4">3.4.22.28</ecNumber>
        </recommendedName>
        <alternativeName>
            <fullName>Picornain 3C</fullName>
        </alternativeName>
    </component>
    <component>
        <recommendedName>
            <fullName>RNA-directed RNA polymerase 3D-POL</fullName>
            <shortName>P3D-POL</shortName>
            <ecNumber evidence="4">2.7.7.48</ecNumber>
        </recommendedName>
    </component>
</protein>
<keyword id="KW-0067">ATP-binding</keyword>
<keyword id="KW-0167">Capsid protein</keyword>
<keyword id="KW-0175">Coiled coil</keyword>
<keyword id="KW-0191">Covalent protein-RNA linkage</keyword>
<keyword id="KW-1015">Disulfide bond</keyword>
<keyword id="KW-0347">Helicase</keyword>
<keyword id="KW-1035">Host cytoplasm</keyword>
<keyword id="KW-1036">Host cytoplasmic vesicle</keyword>
<keyword id="KW-1039">Host endosome</keyword>
<keyword id="KW-1043">Host membrane</keyword>
<keyword id="KW-1045">Host mitochondrion</keyword>
<keyword id="KW-1047">Host mitochondrion outer membrane</keyword>
<keyword id="KW-0945">Host-virus interaction</keyword>
<keyword id="KW-0378">Hydrolase</keyword>
<keyword id="KW-1090">Inhibition of host innate immune response by virus</keyword>
<keyword id="KW-1097">Inhibition of host MAVS by virus</keyword>
<keyword id="KW-1113">Inhibition of host RLR pathway by virus</keyword>
<keyword id="KW-0922">Interferon antiviral system evasion</keyword>
<keyword id="KW-0407">Ion channel</keyword>
<keyword id="KW-0406">Ion transport</keyword>
<keyword id="KW-0472">Membrane</keyword>
<keyword id="KW-0547">Nucleotide-binding</keyword>
<keyword id="KW-0548">Nucleotidyltransferase</keyword>
<keyword id="KW-0597">Phosphoprotein</keyword>
<keyword id="KW-0645">Protease</keyword>
<keyword id="KW-0694">RNA-binding</keyword>
<keyword id="KW-0696">RNA-directed RNA polymerase</keyword>
<keyword id="KW-1143">T=pseudo3 icosahedral capsid protein</keyword>
<keyword id="KW-0788">Thiol protease</keyword>
<keyword id="KW-0808">Transferase</keyword>
<keyword id="KW-0812">Transmembrane</keyword>
<keyword id="KW-1133">Transmembrane helix</keyword>
<keyword id="KW-0813">Transport</keyword>
<keyword id="KW-1161">Viral attachment to host cell</keyword>
<keyword id="KW-0899">Viral immunoevasion</keyword>
<keyword id="KW-1182">Viral ion channel</keyword>
<keyword id="KW-0693">Viral RNA replication</keyword>
<keyword id="KW-0946">Virion</keyword>
<keyword id="KW-1160">Virus entry into host cell</keyword>
<evidence type="ECO:0000250" key="1"/>
<evidence type="ECO:0000250" key="2">
    <source>
        <dbReference type="UniProtKB" id="P03300"/>
    </source>
</evidence>
<evidence type="ECO:0000250" key="3">
    <source>
        <dbReference type="UniProtKB" id="P03303"/>
    </source>
</evidence>
<evidence type="ECO:0000250" key="4">
    <source>
        <dbReference type="UniProtKB" id="P08617"/>
    </source>
</evidence>
<evidence type="ECO:0000255" key="5"/>
<evidence type="ECO:0000255" key="6">
    <source>
        <dbReference type="PROSITE-ProRule" id="PRU00539"/>
    </source>
</evidence>
<evidence type="ECO:0000255" key="7">
    <source>
        <dbReference type="PROSITE-ProRule" id="PRU00551"/>
    </source>
</evidence>
<evidence type="ECO:0000255" key="8">
    <source>
        <dbReference type="PROSITE-ProRule" id="PRU01222"/>
    </source>
</evidence>
<evidence type="ECO:0000305" key="9"/>
<reference key="1">
    <citation type="journal article" date="1985" name="Proc. Natl. Acad. Sci. U.S.A.">
        <title>Primary structure and gene organization of human hepatitis A virus.</title>
        <authorList>
            <person name="Najarian R."/>
            <person name="Caput D."/>
            <person name="Gee W.W."/>
            <person name="Potter S.J."/>
            <person name="Renard A."/>
            <person name="Merryweather J."/>
            <person name="van Nest G."/>
            <person name="Dina D."/>
        </authorList>
    </citation>
    <scope>NUCLEOTIDE SEQUENCE [GENOMIC RNA]</scope>
</reference>
<name>POLG_HAVLA</name>
<accession>P06441</accession>
<feature type="chain" id="PRO_0000311007" description="Genome polyprotein">
    <location>
        <begin position="1"/>
        <end position="2227"/>
    </location>
</feature>
<feature type="chain" id="PRO_0000311008" description="Capsid protein VP0">
    <location>
        <begin position="1"/>
        <end position="245"/>
    </location>
</feature>
<feature type="chain" id="PRO_0000039957" description="Capsid protein VP4">
    <location>
        <begin position="1"/>
        <end position="23"/>
    </location>
</feature>
<feature type="chain" id="PRO_0000039958" description="Capsid protein VP2">
    <location>
        <begin position="24"/>
        <end position="245"/>
    </location>
</feature>
<feature type="chain" id="PRO_0000039959" description="Capsid protein VP3">
    <location>
        <begin position="246"/>
        <end position="491"/>
    </location>
</feature>
<feature type="chain" id="PRO_0000039960" description="Protein VP1-2A">
    <location>
        <begin position="492"/>
        <end position="836"/>
    </location>
</feature>
<feature type="chain" id="PRO_0000311009" description="Capsid protein VP1">
    <location>
        <begin position="492"/>
        <end position="765"/>
    </location>
</feature>
<feature type="chain" id="PRO_0000039961" description="Assembly signal 2A">
    <location>
        <begin position="766"/>
        <end position="836"/>
    </location>
</feature>
<feature type="chain" id="PRO_0000311010" description="Protein 2BC">
    <location>
        <begin position="837"/>
        <end position="1422"/>
    </location>
</feature>
<feature type="chain" id="PRO_0000039962" description="Protein 2B">
    <location>
        <begin position="837"/>
        <end position="1087"/>
    </location>
</feature>
<feature type="chain" id="PRO_0000039963" description="Protein 2C">
    <location>
        <begin position="1088"/>
        <end position="1422"/>
    </location>
</feature>
<feature type="chain" id="PRO_0000311011" description="Protein 3ABCD">
    <location>
        <begin position="1423"/>
        <end position="2227"/>
    </location>
</feature>
<feature type="chain" id="PRO_0000311012" description="Protein 3ABC">
    <location>
        <begin position="1423"/>
        <end position="1738"/>
    </location>
</feature>
<feature type="chain" id="PRO_0000311013" description="Protein 3AB">
    <location>
        <begin position="1423"/>
        <end position="1519"/>
    </location>
</feature>
<feature type="chain" id="PRO_0000039964" description="Protein 3A">
    <location>
        <begin position="1423"/>
        <end position="1496"/>
    </location>
</feature>
<feature type="chain" id="PRO_0000039965" description="Viral protein genome-linked">
    <location>
        <begin position="1497"/>
        <end position="1519"/>
    </location>
</feature>
<feature type="chain" id="PRO_0000311014" description="Protein 3CD">
    <location>
        <begin position="1520"/>
        <end position="2227"/>
    </location>
</feature>
<feature type="chain" id="PRO_0000039966" description="Protease 3C">
    <location>
        <begin position="1520"/>
        <end position="1738"/>
    </location>
</feature>
<feature type="chain" id="PRO_0000039967" description="RNA-directed RNA polymerase 3D-POL">
    <location>
        <begin position="1739"/>
        <end position="2227"/>
    </location>
</feature>
<feature type="transmembrane region" description="Helical" evidence="5">
    <location>
        <begin position="1011"/>
        <end position="1031"/>
    </location>
</feature>
<feature type="transmembrane region" description="Helical" evidence="5">
    <location>
        <begin position="1462"/>
        <end position="1482"/>
    </location>
</feature>
<feature type="domain" description="SF3 helicase" evidence="7">
    <location>
        <begin position="1204"/>
        <end position="1366"/>
    </location>
</feature>
<feature type="domain" description="Peptidase C3" evidence="8">
    <location>
        <begin position="1514"/>
        <end position="1728"/>
    </location>
</feature>
<feature type="domain" description="RdRp catalytic" evidence="6">
    <location>
        <begin position="1976"/>
        <end position="2097"/>
    </location>
</feature>
<feature type="region of interest" description="Involved in P1-2A pentamerization" evidence="4">
    <location>
        <begin position="766"/>
        <end position="836"/>
    </location>
</feature>
<feature type="region of interest" description="Membrane-penetrating ability" evidence="4">
    <location>
        <begin position="1043"/>
        <end position="1070"/>
    </location>
</feature>
<feature type="coiled-coil region" evidence="5">
    <location>
        <begin position="1127"/>
        <end position="1152"/>
    </location>
</feature>
<feature type="short sequence motif" description="(L)YPX(n)L motif" evidence="4">
    <location>
        <begin position="167"/>
        <end position="171"/>
    </location>
</feature>
<feature type="short sequence motif" description="(L)YPX(n)L motif" evidence="4">
    <location>
        <begin position="200"/>
        <end position="205"/>
    </location>
</feature>
<feature type="active site" description="For protease 3C activity" evidence="8">
    <location>
        <position position="1563"/>
    </location>
</feature>
<feature type="active site" description="For protease 3C activity" evidence="8">
    <location>
        <position position="1603"/>
    </location>
</feature>
<feature type="active site" description="For protease 3C activity" evidence="8">
    <location>
        <position position="1691"/>
    </location>
</feature>
<feature type="binding site" evidence="7">
    <location>
        <begin position="1230"/>
        <end position="1237"/>
    </location>
    <ligand>
        <name>ATP</name>
        <dbReference type="ChEBI" id="CHEBI:30616"/>
    </ligand>
</feature>
<feature type="site" description="Cleavage" evidence="5">
    <location>
        <begin position="23"/>
        <end position="24"/>
    </location>
</feature>
<feature type="site" description="Cleavage; by protease 3C" evidence="4">
    <location>
        <begin position="245"/>
        <end position="246"/>
    </location>
</feature>
<feature type="site" description="Cleavage; by protease 3C" evidence="4">
    <location>
        <begin position="491"/>
        <end position="492"/>
    </location>
</feature>
<feature type="site" description="Cleavage; partial; by host" evidence="4">
    <location>
        <begin position="765"/>
        <end position="766"/>
    </location>
</feature>
<feature type="site" description="Important for VP1 folding and capsid assembly" evidence="4">
    <location>
        <position position="769"/>
    </location>
</feature>
<feature type="site" description="Cleavage; by protease 3C" evidence="4">
    <location>
        <begin position="836"/>
        <end position="837"/>
    </location>
</feature>
<feature type="site" description="Cleavage; by protease 3C" evidence="4">
    <location>
        <begin position="1087"/>
        <end position="1088"/>
    </location>
</feature>
<feature type="site" description="Cleavage; by protease 3C" evidence="4">
    <location>
        <begin position="1422"/>
        <end position="1423"/>
    </location>
</feature>
<feature type="site" description="Cleavage; by protease 3C" evidence="4">
    <location>
        <begin position="1496"/>
        <end position="1497"/>
    </location>
</feature>
<feature type="site" description="Cleavage; by protease 3C" evidence="4">
    <location>
        <begin position="1519"/>
        <end position="1520"/>
    </location>
</feature>
<feature type="site" description="Cleavage; by protease 3C" evidence="4">
    <location>
        <begin position="1738"/>
        <end position="1739"/>
    </location>
</feature>
<feature type="modified residue" description="O-(5'-phospho-RNA)-tyrosine" evidence="1">
    <location>
        <position position="1499"/>
    </location>
</feature>
<feature type="disulfide bond" description="Interchain" evidence="4">
    <location>
        <position position="1543"/>
    </location>
</feature>